<sequence length="65" mass="7699">MNVNDLRNKTKAELKKELLELLKEQFNLRMQKGGGEAPRPHLFKRVRRDIARVKTLLGEKERNNE</sequence>
<name>RL29_COXBU</name>
<gene>
    <name evidence="1" type="primary">rpmC</name>
    <name type="ordered locus">CBU_0246</name>
</gene>
<dbReference type="EMBL" id="AE016828">
    <property type="protein sequence ID" value="AAO89804.1"/>
    <property type="molecule type" value="Genomic_DNA"/>
</dbReference>
<dbReference type="RefSeq" id="NP_819290.1">
    <property type="nucleotide sequence ID" value="NC_002971.4"/>
</dbReference>
<dbReference type="RefSeq" id="WP_005771530.1">
    <property type="nucleotide sequence ID" value="NZ_CDBG01000001.1"/>
</dbReference>
<dbReference type="SMR" id="Q83ER8"/>
<dbReference type="STRING" id="227377.CBU_0246"/>
<dbReference type="DNASU" id="1208127"/>
<dbReference type="EnsemblBacteria" id="AAO89804">
    <property type="protein sequence ID" value="AAO89804"/>
    <property type="gene ID" value="CBU_0246"/>
</dbReference>
<dbReference type="GeneID" id="1208127"/>
<dbReference type="KEGG" id="cbu:CBU_0246"/>
<dbReference type="PATRIC" id="fig|227377.7.peg.241"/>
<dbReference type="eggNOG" id="COG0255">
    <property type="taxonomic scope" value="Bacteria"/>
</dbReference>
<dbReference type="HOGENOM" id="CLU_158491_1_2_6"/>
<dbReference type="OrthoDB" id="9815192at2"/>
<dbReference type="Proteomes" id="UP000002671">
    <property type="component" value="Chromosome"/>
</dbReference>
<dbReference type="GO" id="GO:0022625">
    <property type="term" value="C:cytosolic large ribosomal subunit"/>
    <property type="evidence" value="ECO:0000318"/>
    <property type="project" value="GO_Central"/>
</dbReference>
<dbReference type="GO" id="GO:0003735">
    <property type="term" value="F:structural constituent of ribosome"/>
    <property type="evidence" value="ECO:0007669"/>
    <property type="project" value="InterPro"/>
</dbReference>
<dbReference type="GO" id="GO:0006412">
    <property type="term" value="P:translation"/>
    <property type="evidence" value="ECO:0007669"/>
    <property type="project" value="UniProtKB-UniRule"/>
</dbReference>
<dbReference type="CDD" id="cd00427">
    <property type="entry name" value="Ribosomal_L29_HIP"/>
    <property type="match status" value="1"/>
</dbReference>
<dbReference type="FunFam" id="1.10.287.310:FF:000001">
    <property type="entry name" value="50S ribosomal protein L29"/>
    <property type="match status" value="1"/>
</dbReference>
<dbReference type="Gene3D" id="1.10.287.310">
    <property type="match status" value="1"/>
</dbReference>
<dbReference type="HAMAP" id="MF_00374">
    <property type="entry name" value="Ribosomal_uL29"/>
    <property type="match status" value="1"/>
</dbReference>
<dbReference type="InterPro" id="IPR050063">
    <property type="entry name" value="Ribosomal_protein_uL29"/>
</dbReference>
<dbReference type="InterPro" id="IPR001854">
    <property type="entry name" value="Ribosomal_uL29"/>
</dbReference>
<dbReference type="InterPro" id="IPR036049">
    <property type="entry name" value="Ribosomal_uL29_sf"/>
</dbReference>
<dbReference type="NCBIfam" id="TIGR00012">
    <property type="entry name" value="L29"/>
    <property type="match status" value="1"/>
</dbReference>
<dbReference type="PANTHER" id="PTHR10916">
    <property type="entry name" value="60S RIBOSOMAL PROTEIN L35/50S RIBOSOMAL PROTEIN L29"/>
    <property type="match status" value="1"/>
</dbReference>
<dbReference type="PANTHER" id="PTHR10916:SF0">
    <property type="entry name" value="LARGE RIBOSOMAL SUBUNIT PROTEIN UL29C"/>
    <property type="match status" value="1"/>
</dbReference>
<dbReference type="Pfam" id="PF00831">
    <property type="entry name" value="Ribosomal_L29"/>
    <property type="match status" value="1"/>
</dbReference>
<dbReference type="SUPFAM" id="SSF46561">
    <property type="entry name" value="Ribosomal protein L29 (L29p)"/>
    <property type="match status" value="1"/>
</dbReference>
<organism>
    <name type="scientific">Coxiella burnetii (strain RSA 493 / Nine Mile phase I)</name>
    <dbReference type="NCBI Taxonomy" id="227377"/>
    <lineage>
        <taxon>Bacteria</taxon>
        <taxon>Pseudomonadati</taxon>
        <taxon>Pseudomonadota</taxon>
        <taxon>Gammaproteobacteria</taxon>
        <taxon>Legionellales</taxon>
        <taxon>Coxiellaceae</taxon>
        <taxon>Coxiella</taxon>
    </lineage>
</organism>
<feature type="chain" id="PRO_0000130382" description="Large ribosomal subunit protein uL29">
    <location>
        <begin position="1"/>
        <end position="65"/>
    </location>
</feature>
<keyword id="KW-1185">Reference proteome</keyword>
<keyword id="KW-0687">Ribonucleoprotein</keyword>
<keyword id="KW-0689">Ribosomal protein</keyword>
<evidence type="ECO:0000255" key="1">
    <source>
        <dbReference type="HAMAP-Rule" id="MF_00374"/>
    </source>
</evidence>
<evidence type="ECO:0000305" key="2"/>
<reference key="1">
    <citation type="journal article" date="2003" name="Proc. Natl. Acad. Sci. U.S.A.">
        <title>Complete genome sequence of the Q-fever pathogen, Coxiella burnetii.</title>
        <authorList>
            <person name="Seshadri R."/>
            <person name="Paulsen I.T."/>
            <person name="Eisen J.A."/>
            <person name="Read T.D."/>
            <person name="Nelson K.E."/>
            <person name="Nelson W.C."/>
            <person name="Ward N.L."/>
            <person name="Tettelin H."/>
            <person name="Davidsen T.M."/>
            <person name="Beanan M.J."/>
            <person name="DeBoy R.T."/>
            <person name="Daugherty S.C."/>
            <person name="Brinkac L.M."/>
            <person name="Madupu R."/>
            <person name="Dodson R.J."/>
            <person name="Khouri H.M."/>
            <person name="Lee K.H."/>
            <person name="Carty H.A."/>
            <person name="Scanlan D."/>
            <person name="Heinzen R.A."/>
            <person name="Thompson H.A."/>
            <person name="Samuel J.E."/>
            <person name="Fraser C.M."/>
            <person name="Heidelberg J.F."/>
        </authorList>
    </citation>
    <scope>NUCLEOTIDE SEQUENCE [LARGE SCALE GENOMIC DNA]</scope>
    <source>
        <strain>RSA 493 / Nine Mile phase I</strain>
    </source>
</reference>
<protein>
    <recommendedName>
        <fullName evidence="1">Large ribosomal subunit protein uL29</fullName>
    </recommendedName>
    <alternativeName>
        <fullName evidence="2">50S ribosomal protein L29</fullName>
    </alternativeName>
</protein>
<proteinExistence type="inferred from homology"/>
<comment type="similarity">
    <text evidence="1">Belongs to the universal ribosomal protein uL29 family.</text>
</comment>
<accession>Q83ER8</accession>